<keyword id="KW-1003">Cell membrane</keyword>
<keyword id="KW-1015">Disulfide bond</keyword>
<keyword id="KW-0297">G-protein coupled receptor</keyword>
<keyword id="KW-0325">Glycoprotein</keyword>
<keyword id="KW-0472">Membrane</keyword>
<keyword id="KW-0552">Olfaction</keyword>
<keyword id="KW-0675">Receptor</keyword>
<keyword id="KW-1185">Reference proteome</keyword>
<keyword id="KW-0716">Sensory transduction</keyword>
<keyword id="KW-0807">Transducer</keyword>
<keyword id="KW-0812">Transmembrane</keyword>
<keyword id="KW-1133">Transmembrane helix</keyword>
<protein>
    <recommendedName>
        <fullName>Olfactory receptor 10H5</fullName>
    </recommendedName>
    <alternativeName>
        <fullName>Olfactory receptor OR19-25</fullName>
    </alternativeName>
    <alternativeName>
        <fullName>Olfactory receptor OR19-26</fullName>
    </alternativeName>
</protein>
<sequence>MQGLNHTSVSEFILVGFSAFPHLQLMLFLLFLLMYLFTLLGNLLIMATVWSERSLHMPMYLFLCALSITEILYTVAIIPRMLADLLSTQRSIAFLACASQMFFSFSFGFTHSFLLTVMGYDRYVAICHPLRYNVLMSLRGCTCRVGCSWAGGLVMGMVVTSAIFHLAFCGHKEIHHFFCHVPPLLKLACGDDVLVVAKGVGLVCITALLGCFLLILLSYAFIVAAILKIPSAEGRNKAFSTCASHLTVVVVHYGFASVIYLKPKGPQSPEGDTLMGITYTVLTPFLSPIIFSLRNKELKVAMKKTCFTKLFPQNC</sequence>
<gene>
    <name type="primary">OR10H5</name>
</gene>
<evidence type="ECO:0000255" key="1"/>
<evidence type="ECO:0000255" key="2">
    <source>
        <dbReference type="PROSITE-ProRule" id="PRU00521"/>
    </source>
</evidence>
<evidence type="ECO:0000305" key="3"/>
<comment type="function">
    <text evidence="3">Odorant receptor.</text>
</comment>
<comment type="subcellular location">
    <subcellularLocation>
        <location>Cell membrane</location>
        <topology>Multi-pass membrane protein</topology>
    </subcellularLocation>
</comment>
<comment type="similarity">
    <text evidence="2">Belongs to the G-protein coupled receptor 1 family.</text>
</comment>
<comment type="online information" name="Human Olfactory Receptor Data Exploratorium (HORDE)">
    <link uri="http://genome.weizmann.ac.il/horde/card/index/symbol:OR10H5"/>
</comment>
<proteinExistence type="evidence at transcript level"/>
<accession>Q8NGA6</accession>
<accession>Q6IFJ0</accession>
<accession>Q96R60</accession>
<reference key="1">
    <citation type="submission" date="2001-07" db="EMBL/GenBank/DDBJ databases">
        <title>Genome-wide discovery and analysis of human seven transmembrane helix receptor genes.</title>
        <authorList>
            <person name="Suwa M."/>
            <person name="Sato T."/>
            <person name="Okouchi I."/>
            <person name="Arita M."/>
            <person name="Futami K."/>
            <person name="Matsumoto S."/>
            <person name="Tsutsumi S."/>
            <person name="Aburatani H."/>
            <person name="Asai K."/>
            <person name="Akiyama Y."/>
        </authorList>
    </citation>
    <scope>NUCLEOTIDE SEQUENCE [GENOMIC DNA]</scope>
</reference>
<reference key="2">
    <citation type="journal article" date="2004" name="Genome Res.">
        <title>The status, quality, and expansion of the NIH full-length cDNA project: the Mammalian Gene Collection (MGC).</title>
        <authorList>
            <consortium name="The MGC Project Team"/>
        </authorList>
    </citation>
    <scope>NUCLEOTIDE SEQUENCE [LARGE SCALE MRNA]</scope>
</reference>
<reference key="3">
    <citation type="journal article" date="2002" name="Genomics">
        <title>DEFOG: a practical scheme for deciphering families of genes.</title>
        <authorList>
            <person name="Fuchs T."/>
            <person name="Malecova B."/>
            <person name="Linhart C."/>
            <person name="Sharan R."/>
            <person name="Khen M."/>
            <person name="Herwig R."/>
            <person name="Shmulevich D."/>
            <person name="Elkon R."/>
            <person name="Steinfath M."/>
            <person name="O'Brien J.K."/>
            <person name="Radelof U."/>
            <person name="Lehrach H."/>
            <person name="Lancet D."/>
            <person name="Shamir R."/>
        </authorList>
    </citation>
    <scope>NUCLEOTIDE SEQUENCE [GENOMIC DNA] OF 68-284</scope>
</reference>
<reference key="4">
    <citation type="journal article" date="2004" name="Proc. Natl. Acad. Sci. U.S.A.">
        <title>The human olfactory receptor gene family.</title>
        <authorList>
            <person name="Malnic B."/>
            <person name="Godfrey P.A."/>
            <person name="Buck L.B."/>
        </authorList>
    </citation>
    <scope>IDENTIFICATION</scope>
</reference>
<reference key="5">
    <citation type="journal article" date="2004" name="Proc. Natl. Acad. Sci. U.S.A.">
        <authorList>
            <person name="Malnic B."/>
            <person name="Godfrey P.A."/>
            <person name="Buck L.B."/>
        </authorList>
    </citation>
    <scope>ERRATUM OF PUBMED:14983052</scope>
</reference>
<name>O10H5_HUMAN</name>
<feature type="chain" id="PRO_0000150706" description="Olfactory receptor 10H5">
    <location>
        <begin position="1"/>
        <end position="315"/>
    </location>
</feature>
<feature type="topological domain" description="Extracellular" evidence="1">
    <location>
        <begin position="1"/>
        <end position="25"/>
    </location>
</feature>
<feature type="transmembrane region" description="Helical; Name=1" evidence="1">
    <location>
        <begin position="26"/>
        <end position="46"/>
    </location>
</feature>
<feature type="topological domain" description="Cytoplasmic" evidence="1">
    <location>
        <begin position="47"/>
        <end position="54"/>
    </location>
</feature>
<feature type="transmembrane region" description="Helical; Name=2" evidence="1">
    <location>
        <begin position="55"/>
        <end position="75"/>
    </location>
</feature>
<feature type="topological domain" description="Extracellular" evidence="1">
    <location>
        <begin position="76"/>
        <end position="99"/>
    </location>
</feature>
<feature type="transmembrane region" description="Helical; Name=3" evidence="1">
    <location>
        <begin position="100"/>
        <end position="120"/>
    </location>
</feature>
<feature type="topological domain" description="Cytoplasmic" evidence="1">
    <location>
        <begin position="121"/>
        <end position="139"/>
    </location>
</feature>
<feature type="transmembrane region" description="Helical; Name=4" evidence="1">
    <location>
        <begin position="140"/>
        <end position="160"/>
    </location>
</feature>
<feature type="topological domain" description="Extracellular" evidence="1">
    <location>
        <begin position="161"/>
        <end position="197"/>
    </location>
</feature>
<feature type="transmembrane region" description="Helical; Name=5" evidence="1">
    <location>
        <begin position="198"/>
        <end position="218"/>
    </location>
</feature>
<feature type="topological domain" description="Cytoplasmic" evidence="1">
    <location>
        <begin position="219"/>
        <end position="238"/>
    </location>
</feature>
<feature type="transmembrane region" description="Helical; Name=6" evidence="1">
    <location>
        <begin position="239"/>
        <end position="259"/>
    </location>
</feature>
<feature type="topological domain" description="Extracellular" evidence="1">
    <location>
        <begin position="260"/>
        <end position="272"/>
    </location>
</feature>
<feature type="transmembrane region" description="Helical; Name=7" evidence="1">
    <location>
        <begin position="273"/>
        <end position="293"/>
    </location>
</feature>
<feature type="topological domain" description="Cytoplasmic" evidence="1">
    <location>
        <begin position="294"/>
        <end position="315"/>
    </location>
</feature>
<feature type="glycosylation site" description="N-linked (GlcNAc...) asparagine" evidence="1">
    <location>
        <position position="5"/>
    </location>
</feature>
<feature type="disulfide bond" evidence="2">
    <location>
        <begin position="97"/>
        <end position="189"/>
    </location>
</feature>
<dbReference type="EMBL" id="AB065920">
    <property type="protein sequence ID" value="BAC06135.1"/>
    <property type="molecule type" value="Genomic_DNA"/>
</dbReference>
<dbReference type="EMBL" id="BC136869">
    <property type="protein sequence ID" value="AAI36870.1"/>
    <property type="molecule type" value="mRNA"/>
</dbReference>
<dbReference type="EMBL" id="AF399583">
    <property type="protein sequence ID" value="AAK95068.1"/>
    <property type="molecule type" value="Genomic_DNA"/>
</dbReference>
<dbReference type="EMBL" id="BK004271">
    <property type="protein sequence ID" value="DAA04669.1"/>
    <property type="molecule type" value="Genomic_DNA"/>
</dbReference>
<dbReference type="EMBL" id="BK004272">
    <property type="protein sequence ID" value="DAA04670.1"/>
    <property type="molecule type" value="Genomic_DNA"/>
</dbReference>
<dbReference type="CCDS" id="CCDS32940.1"/>
<dbReference type="RefSeq" id="NP_001004466.1">
    <property type="nucleotide sequence ID" value="NM_001004466.2"/>
</dbReference>
<dbReference type="SMR" id="Q8NGA6"/>
<dbReference type="FunCoup" id="Q8NGA6">
    <property type="interactions" value="465"/>
</dbReference>
<dbReference type="STRING" id="9606.ENSP00000493242"/>
<dbReference type="GlyCosmos" id="Q8NGA6">
    <property type="glycosylation" value="1 site, No reported glycans"/>
</dbReference>
<dbReference type="GlyGen" id="Q8NGA6">
    <property type="glycosylation" value="1 site"/>
</dbReference>
<dbReference type="iPTMnet" id="Q8NGA6"/>
<dbReference type="PhosphoSitePlus" id="Q8NGA6"/>
<dbReference type="BioMuta" id="OR10H5"/>
<dbReference type="DMDM" id="38372654"/>
<dbReference type="MassIVE" id="Q8NGA6"/>
<dbReference type="PaxDb" id="9606-ENSP00000310704"/>
<dbReference type="PeptideAtlas" id="Q8NGA6"/>
<dbReference type="Antibodypedia" id="57128">
    <property type="antibodies" value="74 antibodies from 18 providers"/>
</dbReference>
<dbReference type="DNASU" id="284433"/>
<dbReference type="Ensembl" id="ENST00000308940.8">
    <property type="protein sequence ID" value="ENSP00000310704.8"/>
    <property type="gene ID" value="ENSG00000172519.10"/>
</dbReference>
<dbReference type="Ensembl" id="ENST00000642092.2">
    <property type="protein sequence ID" value="ENSP00000493242.1"/>
    <property type="gene ID" value="ENSG00000172519.10"/>
</dbReference>
<dbReference type="GeneID" id="284433"/>
<dbReference type="KEGG" id="hsa:284433"/>
<dbReference type="MANE-Select" id="ENST00000642092.2">
    <property type="protein sequence ID" value="ENSP00000493242.1"/>
    <property type="RefSeq nucleotide sequence ID" value="NM_001004466.2"/>
    <property type="RefSeq protein sequence ID" value="NP_001004466.1"/>
</dbReference>
<dbReference type="UCSC" id="uc010xos.3">
    <property type="organism name" value="human"/>
</dbReference>
<dbReference type="AGR" id="HGNC:15389"/>
<dbReference type="CTD" id="284433"/>
<dbReference type="GeneCards" id="OR10H5"/>
<dbReference type="HGNC" id="HGNC:15389">
    <property type="gene designation" value="OR10H5"/>
</dbReference>
<dbReference type="HPA" id="ENSG00000172519">
    <property type="expression patterns" value="Not detected"/>
</dbReference>
<dbReference type="neXtProt" id="NX_Q8NGA6"/>
<dbReference type="PharmGKB" id="PA31981"/>
<dbReference type="VEuPathDB" id="HostDB:ENSG00000172519"/>
<dbReference type="eggNOG" id="ENOG502SJHK">
    <property type="taxonomic scope" value="Eukaryota"/>
</dbReference>
<dbReference type="GeneTree" id="ENSGT01120000271905"/>
<dbReference type="HOGENOM" id="CLU_012526_1_0_1"/>
<dbReference type="InParanoid" id="Q8NGA6"/>
<dbReference type="OMA" id="HTIPFAA"/>
<dbReference type="OrthoDB" id="9975554at2759"/>
<dbReference type="PAN-GO" id="Q8NGA6">
    <property type="GO annotations" value="6 GO annotations based on evolutionary models"/>
</dbReference>
<dbReference type="PhylomeDB" id="Q8NGA6"/>
<dbReference type="TreeFam" id="TF337675"/>
<dbReference type="PathwayCommons" id="Q8NGA6"/>
<dbReference type="Reactome" id="R-HSA-381753">
    <property type="pathway name" value="Olfactory Signaling Pathway"/>
</dbReference>
<dbReference type="Reactome" id="R-HSA-9752946">
    <property type="pathway name" value="Expression and translocation of olfactory receptors"/>
</dbReference>
<dbReference type="BioGRID-ORCS" id="284433">
    <property type="hits" value="11 hits in 721 CRISPR screens"/>
</dbReference>
<dbReference type="ChiTaRS" id="OR10H5">
    <property type="organism name" value="human"/>
</dbReference>
<dbReference type="GenomeRNAi" id="284433"/>
<dbReference type="Pharos" id="Q8NGA6">
    <property type="development level" value="Tdark"/>
</dbReference>
<dbReference type="PRO" id="PR:Q8NGA6"/>
<dbReference type="Proteomes" id="UP000005640">
    <property type="component" value="Chromosome 19"/>
</dbReference>
<dbReference type="RNAct" id="Q8NGA6">
    <property type="molecule type" value="protein"/>
</dbReference>
<dbReference type="Bgee" id="ENSG00000172519">
    <property type="expression patterns" value="Expressed in islet of Langerhans"/>
</dbReference>
<dbReference type="ExpressionAtlas" id="Q8NGA6">
    <property type="expression patterns" value="baseline and differential"/>
</dbReference>
<dbReference type="GO" id="GO:0005886">
    <property type="term" value="C:plasma membrane"/>
    <property type="evidence" value="ECO:0000318"/>
    <property type="project" value="GO_Central"/>
</dbReference>
<dbReference type="GO" id="GO:0004930">
    <property type="term" value="F:G protein-coupled receptor activity"/>
    <property type="evidence" value="ECO:0007669"/>
    <property type="project" value="UniProtKB-KW"/>
</dbReference>
<dbReference type="GO" id="GO:0004984">
    <property type="term" value="F:olfactory receptor activity"/>
    <property type="evidence" value="ECO:0000318"/>
    <property type="project" value="GO_Central"/>
</dbReference>
<dbReference type="GO" id="GO:0050911">
    <property type="term" value="P:detection of chemical stimulus involved in sensory perception of smell"/>
    <property type="evidence" value="ECO:0000318"/>
    <property type="project" value="GO_Central"/>
</dbReference>
<dbReference type="CDD" id="cd15225">
    <property type="entry name" value="7tmA_OR10A-like"/>
    <property type="match status" value="1"/>
</dbReference>
<dbReference type="FunFam" id="1.20.1070.10:FF:000110">
    <property type="entry name" value="olfactory receptor 10H1-like"/>
    <property type="match status" value="1"/>
</dbReference>
<dbReference type="Gene3D" id="1.20.1070.10">
    <property type="entry name" value="Rhodopsin 7-helix transmembrane proteins"/>
    <property type="match status" value="1"/>
</dbReference>
<dbReference type="InterPro" id="IPR000276">
    <property type="entry name" value="GPCR_Rhodpsn"/>
</dbReference>
<dbReference type="InterPro" id="IPR017452">
    <property type="entry name" value="GPCR_Rhodpsn_7TM"/>
</dbReference>
<dbReference type="InterPro" id="IPR000725">
    <property type="entry name" value="Olfact_rcpt"/>
</dbReference>
<dbReference type="PANTHER" id="PTHR26453">
    <property type="entry name" value="OLFACTORY RECEPTOR"/>
    <property type="match status" value="1"/>
</dbReference>
<dbReference type="Pfam" id="PF13853">
    <property type="entry name" value="7tm_4"/>
    <property type="match status" value="1"/>
</dbReference>
<dbReference type="PRINTS" id="PR00237">
    <property type="entry name" value="GPCRRHODOPSN"/>
</dbReference>
<dbReference type="PRINTS" id="PR00245">
    <property type="entry name" value="OLFACTORYR"/>
</dbReference>
<dbReference type="SUPFAM" id="SSF81321">
    <property type="entry name" value="Family A G protein-coupled receptor-like"/>
    <property type="match status" value="1"/>
</dbReference>
<dbReference type="PROSITE" id="PS50262">
    <property type="entry name" value="G_PROTEIN_RECEP_F1_2"/>
    <property type="match status" value="1"/>
</dbReference>
<organism>
    <name type="scientific">Homo sapiens</name>
    <name type="common">Human</name>
    <dbReference type="NCBI Taxonomy" id="9606"/>
    <lineage>
        <taxon>Eukaryota</taxon>
        <taxon>Metazoa</taxon>
        <taxon>Chordata</taxon>
        <taxon>Craniata</taxon>
        <taxon>Vertebrata</taxon>
        <taxon>Euteleostomi</taxon>
        <taxon>Mammalia</taxon>
        <taxon>Eutheria</taxon>
        <taxon>Euarchontoglires</taxon>
        <taxon>Primates</taxon>
        <taxon>Haplorrhini</taxon>
        <taxon>Catarrhini</taxon>
        <taxon>Hominidae</taxon>
        <taxon>Homo</taxon>
    </lineage>
</organism>